<reference key="1">
    <citation type="journal article" date="2005" name="Nat. Biotechnol.">
        <title>The genome sequence of the ethanologenic bacterium Zymomonas mobilis ZM4.</title>
        <authorList>
            <person name="Seo J.-S."/>
            <person name="Chong H."/>
            <person name="Park H.S."/>
            <person name="Yoon K.-O."/>
            <person name="Jung C."/>
            <person name="Kim J.J."/>
            <person name="Hong J.H."/>
            <person name="Kim H."/>
            <person name="Kim J.-H."/>
            <person name="Kil J.-I."/>
            <person name="Park C.J."/>
            <person name="Oh H.-M."/>
            <person name="Lee J.-S."/>
            <person name="Jin S.-J."/>
            <person name="Um H.-W."/>
            <person name="Lee H.-J."/>
            <person name="Oh S.-J."/>
            <person name="Kim J.Y."/>
            <person name="Kang H.L."/>
            <person name="Lee S.Y."/>
            <person name="Lee K.J."/>
            <person name="Kang H.S."/>
        </authorList>
    </citation>
    <scope>NUCLEOTIDE SEQUENCE [LARGE SCALE GENOMIC DNA]</scope>
    <source>
        <strain>ATCC 31821 / ZM4 / CP4</strain>
    </source>
</reference>
<keyword id="KW-0963">Cytoplasm</keyword>
<keyword id="KW-0489">Methyltransferase</keyword>
<keyword id="KW-1185">Reference proteome</keyword>
<keyword id="KW-0698">rRNA processing</keyword>
<keyword id="KW-0949">S-adenosyl-L-methionine</keyword>
<keyword id="KW-0808">Transferase</keyword>
<organism>
    <name type="scientific">Zymomonas mobilis subsp. mobilis (strain ATCC 31821 / ZM4 / CP4)</name>
    <dbReference type="NCBI Taxonomy" id="264203"/>
    <lineage>
        <taxon>Bacteria</taxon>
        <taxon>Pseudomonadati</taxon>
        <taxon>Pseudomonadota</taxon>
        <taxon>Alphaproteobacteria</taxon>
        <taxon>Sphingomonadales</taxon>
        <taxon>Zymomonadaceae</taxon>
        <taxon>Zymomonas</taxon>
    </lineage>
</organism>
<dbReference type="EC" id="2.1.1.177" evidence="1"/>
<dbReference type="EMBL" id="AE008692">
    <property type="protein sequence ID" value="AAV90288.1"/>
    <property type="molecule type" value="Genomic_DNA"/>
</dbReference>
<dbReference type="RefSeq" id="WP_011241413.1">
    <property type="nucleotide sequence ID" value="NZ_CP035711.1"/>
</dbReference>
<dbReference type="SMR" id="Q5NLX2"/>
<dbReference type="STRING" id="264203.ZMO1664"/>
<dbReference type="KEGG" id="zmo:ZMO1664"/>
<dbReference type="eggNOG" id="COG1576">
    <property type="taxonomic scope" value="Bacteria"/>
</dbReference>
<dbReference type="HOGENOM" id="CLU_100552_1_1_5"/>
<dbReference type="Proteomes" id="UP000001173">
    <property type="component" value="Chromosome"/>
</dbReference>
<dbReference type="GO" id="GO:0005737">
    <property type="term" value="C:cytoplasm"/>
    <property type="evidence" value="ECO:0007669"/>
    <property type="project" value="UniProtKB-SubCell"/>
</dbReference>
<dbReference type="GO" id="GO:0070038">
    <property type="term" value="F:rRNA (pseudouridine-N3-)-methyltransferase activity"/>
    <property type="evidence" value="ECO:0007669"/>
    <property type="project" value="UniProtKB-UniRule"/>
</dbReference>
<dbReference type="CDD" id="cd18081">
    <property type="entry name" value="RlmH-like"/>
    <property type="match status" value="1"/>
</dbReference>
<dbReference type="Gene3D" id="3.40.1280.10">
    <property type="match status" value="1"/>
</dbReference>
<dbReference type="HAMAP" id="MF_00658">
    <property type="entry name" value="23SrRNA_methyltr_H"/>
    <property type="match status" value="1"/>
</dbReference>
<dbReference type="InterPro" id="IPR029028">
    <property type="entry name" value="Alpha/beta_knot_MTases"/>
</dbReference>
<dbReference type="InterPro" id="IPR003742">
    <property type="entry name" value="RlmH-like"/>
</dbReference>
<dbReference type="InterPro" id="IPR029026">
    <property type="entry name" value="tRNA_m1G_MTases_N"/>
</dbReference>
<dbReference type="PANTHER" id="PTHR33603">
    <property type="entry name" value="METHYLTRANSFERASE"/>
    <property type="match status" value="1"/>
</dbReference>
<dbReference type="PANTHER" id="PTHR33603:SF1">
    <property type="entry name" value="RIBOSOMAL RNA LARGE SUBUNIT METHYLTRANSFERASE H"/>
    <property type="match status" value="1"/>
</dbReference>
<dbReference type="Pfam" id="PF02590">
    <property type="entry name" value="SPOUT_MTase"/>
    <property type="match status" value="1"/>
</dbReference>
<dbReference type="PIRSF" id="PIRSF004505">
    <property type="entry name" value="MT_bac"/>
    <property type="match status" value="1"/>
</dbReference>
<dbReference type="SUPFAM" id="SSF75217">
    <property type="entry name" value="alpha/beta knot"/>
    <property type="match status" value="1"/>
</dbReference>
<evidence type="ECO:0000255" key="1">
    <source>
        <dbReference type="HAMAP-Rule" id="MF_00658"/>
    </source>
</evidence>
<accession>Q5NLX2</accession>
<gene>
    <name evidence="1" type="primary">rlmH</name>
    <name type="ordered locus">ZMO1664</name>
</gene>
<name>RLMH_ZYMMO</name>
<proteinExistence type="inferred from homology"/>
<sequence length="142" mass="16157">MKIHIIARGRIGRSPEGELVERYMKRLSWPYRITELPDRASNAPLPPAPPHSITVAMDEKGKTWRSMEFAQKIGNWQDEGRSEIRFLIGAADGLREEERAAADMYFAFGAATWPHMLARAMLAEQLWRASAILSGHPYHREG</sequence>
<protein>
    <recommendedName>
        <fullName evidence="1">Ribosomal RNA large subunit methyltransferase H</fullName>
        <ecNumber evidence="1">2.1.1.177</ecNumber>
    </recommendedName>
    <alternativeName>
        <fullName evidence="1">23S rRNA (pseudouridine1915-N3)-methyltransferase</fullName>
    </alternativeName>
    <alternativeName>
        <fullName evidence="1">23S rRNA m3Psi1915 methyltransferase</fullName>
    </alternativeName>
    <alternativeName>
        <fullName evidence="1">rRNA (pseudouridine-N3-)-methyltransferase RlmH</fullName>
    </alternativeName>
</protein>
<comment type="function">
    <text evidence="1">Specifically methylates the pseudouridine at position 1915 (m3Psi1915) in 23S rRNA.</text>
</comment>
<comment type="catalytic activity">
    <reaction evidence="1">
        <text>pseudouridine(1915) in 23S rRNA + S-adenosyl-L-methionine = N(3)-methylpseudouridine(1915) in 23S rRNA + S-adenosyl-L-homocysteine + H(+)</text>
        <dbReference type="Rhea" id="RHEA:42752"/>
        <dbReference type="Rhea" id="RHEA-COMP:10221"/>
        <dbReference type="Rhea" id="RHEA-COMP:10222"/>
        <dbReference type="ChEBI" id="CHEBI:15378"/>
        <dbReference type="ChEBI" id="CHEBI:57856"/>
        <dbReference type="ChEBI" id="CHEBI:59789"/>
        <dbReference type="ChEBI" id="CHEBI:65314"/>
        <dbReference type="ChEBI" id="CHEBI:74486"/>
        <dbReference type="EC" id="2.1.1.177"/>
    </reaction>
</comment>
<comment type="subunit">
    <text evidence="1">Homodimer.</text>
</comment>
<comment type="subcellular location">
    <subcellularLocation>
        <location evidence="1">Cytoplasm</location>
    </subcellularLocation>
</comment>
<comment type="similarity">
    <text evidence="1">Belongs to the RNA methyltransferase RlmH family.</text>
</comment>
<feature type="chain" id="PRO_0000198219" description="Ribosomal RNA large subunit methyltransferase H">
    <location>
        <begin position="1"/>
        <end position="142"/>
    </location>
</feature>
<feature type="binding site" evidence="1">
    <location>
        <position position="89"/>
    </location>
    <ligand>
        <name>S-adenosyl-L-methionine</name>
        <dbReference type="ChEBI" id="CHEBI:59789"/>
    </ligand>
</feature>